<feature type="chain" id="PRO_0000151189" description="Undecaprenyl-diphosphatase">
    <location>
        <begin position="1"/>
        <end position="268"/>
    </location>
</feature>
<feature type="transmembrane region" description="Helical" evidence="1">
    <location>
        <begin position="47"/>
        <end position="67"/>
    </location>
</feature>
<feature type="transmembrane region" description="Helical" evidence="1">
    <location>
        <begin position="83"/>
        <end position="103"/>
    </location>
</feature>
<feature type="transmembrane region" description="Helical" evidence="1">
    <location>
        <begin position="109"/>
        <end position="129"/>
    </location>
</feature>
<feature type="transmembrane region" description="Helical" evidence="1">
    <location>
        <begin position="144"/>
        <end position="164"/>
    </location>
</feature>
<feature type="transmembrane region" description="Helical" evidence="1">
    <location>
        <begin position="184"/>
        <end position="204"/>
    </location>
</feature>
<feature type="transmembrane region" description="Helical" evidence="1">
    <location>
        <begin position="217"/>
        <end position="237"/>
    </location>
</feature>
<feature type="transmembrane region" description="Helical" evidence="1">
    <location>
        <begin position="248"/>
        <end position="268"/>
    </location>
</feature>
<accession>P60940</accession>
<sequence length="268" mass="29341">MLIDIIRAVILGIVEGVTEFLPVSSTGHLLLAERFFNLGEGNFWKSFAVLIQLGAILAILALYFVKLWRIALGMFTDANARRFVIGVLVAFLPAAVIGAAFGGYIKHYLFNPWVVCFSLIVGGAILLWVDQLDLKPRYHDATAFPLLTYFYIGCAQCTAMIPGVSRSGASIVAAMLLGTDKRSAAEFSFFLAIPTMLGAFVYDLYKNHADMTADNLIIVAIGFVVSFITAIIVVKTFLTYVTRHGFELFAWWRVIVGTLGLIALALGL</sequence>
<reference key="1">
    <citation type="journal article" date="2004" name="Nat. Biotechnol.">
        <title>Complete genome sequence of the metabolically versatile photosynthetic bacterium Rhodopseudomonas palustris.</title>
        <authorList>
            <person name="Larimer F.W."/>
            <person name="Chain P."/>
            <person name="Hauser L."/>
            <person name="Lamerdin J.E."/>
            <person name="Malfatti S."/>
            <person name="Do L."/>
            <person name="Land M.L."/>
            <person name="Pelletier D.A."/>
            <person name="Beatty J.T."/>
            <person name="Lang A.S."/>
            <person name="Tabita F.R."/>
            <person name="Gibson J.L."/>
            <person name="Hanson T.E."/>
            <person name="Bobst C."/>
            <person name="Torres y Torres J.L."/>
            <person name="Peres C."/>
            <person name="Harrison F.H."/>
            <person name="Gibson J."/>
            <person name="Harwood C.S."/>
        </authorList>
    </citation>
    <scope>NUCLEOTIDE SEQUENCE [LARGE SCALE GENOMIC DNA]</scope>
    <source>
        <strain>ATCC BAA-98 / CGA009</strain>
    </source>
</reference>
<dbReference type="EC" id="3.6.1.27" evidence="1"/>
<dbReference type="EMBL" id="BX572593">
    <property type="protein sequence ID" value="CAE25488.1"/>
    <property type="molecule type" value="Genomic_DNA"/>
</dbReference>
<dbReference type="RefSeq" id="WP_011155615.1">
    <property type="nucleotide sequence ID" value="NZ_CP116810.1"/>
</dbReference>
<dbReference type="SMR" id="P60940"/>
<dbReference type="STRING" id="258594.RPA0044"/>
<dbReference type="GeneID" id="66891043"/>
<dbReference type="eggNOG" id="COG1968">
    <property type="taxonomic scope" value="Bacteria"/>
</dbReference>
<dbReference type="HOGENOM" id="CLU_060296_2_0_5"/>
<dbReference type="PhylomeDB" id="P60940"/>
<dbReference type="GO" id="GO:0005886">
    <property type="term" value="C:plasma membrane"/>
    <property type="evidence" value="ECO:0007669"/>
    <property type="project" value="UniProtKB-SubCell"/>
</dbReference>
<dbReference type="GO" id="GO:0050380">
    <property type="term" value="F:undecaprenyl-diphosphatase activity"/>
    <property type="evidence" value="ECO:0007669"/>
    <property type="project" value="UniProtKB-UniRule"/>
</dbReference>
<dbReference type="GO" id="GO:0071555">
    <property type="term" value="P:cell wall organization"/>
    <property type="evidence" value="ECO:0007669"/>
    <property type="project" value="UniProtKB-KW"/>
</dbReference>
<dbReference type="GO" id="GO:0009252">
    <property type="term" value="P:peptidoglycan biosynthetic process"/>
    <property type="evidence" value="ECO:0007669"/>
    <property type="project" value="UniProtKB-KW"/>
</dbReference>
<dbReference type="GO" id="GO:0008360">
    <property type="term" value="P:regulation of cell shape"/>
    <property type="evidence" value="ECO:0007669"/>
    <property type="project" value="UniProtKB-KW"/>
</dbReference>
<dbReference type="GO" id="GO:0046677">
    <property type="term" value="P:response to antibiotic"/>
    <property type="evidence" value="ECO:0007669"/>
    <property type="project" value="UniProtKB-UniRule"/>
</dbReference>
<dbReference type="HAMAP" id="MF_01006">
    <property type="entry name" value="Undec_diphosphatase"/>
    <property type="match status" value="1"/>
</dbReference>
<dbReference type="InterPro" id="IPR003824">
    <property type="entry name" value="UppP"/>
</dbReference>
<dbReference type="NCBIfam" id="NF001389">
    <property type="entry name" value="PRK00281.1-2"/>
    <property type="match status" value="1"/>
</dbReference>
<dbReference type="NCBIfam" id="NF001390">
    <property type="entry name" value="PRK00281.1-4"/>
    <property type="match status" value="1"/>
</dbReference>
<dbReference type="NCBIfam" id="TIGR00753">
    <property type="entry name" value="undec_PP_bacA"/>
    <property type="match status" value="1"/>
</dbReference>
<dbReference type="PANTHER" id="PTHR30622">
    <property type="entry name" value="UNDECAPRENYL-DIPHOSPHATASE"/>
    <property type="match status" value="1"/>
</dbReference>
<dbReference type="PANTHER" id="PTHR30622:SF3">
    <property type="entry name" value="UNDECAPRENYL-DIPHOSPHATASE"/>
    <property type="match status" value="1"/>
</dbReference>
<dbReference type="Pfam" id="PF02673">
    <property type="entry name" value="BacA"/>
    <property type="match status" value="1"/>
</dbReference>
<gene>
    <name evidence="1" type="primary">uppP</name>
    <name type="synonym">bacA</name>
    <name type="synonym">upk</name>
    <name type="ordered locus">RPA0044</name>
</gene>
<evidence type="ECO:0000255" key="1">
    <source>
        <dbReference type="HAMAP-Rule" id="MF_01006"/>
    </source>
</evidence>
<name>UPPP_RHOPA</name>
<comment type="function">
    <text evidence="1">Catalyzes the dephosphorylation of undecaprenyl diphosphate (UPP). Confers resistance to bacitracin.</text>
</comment>
<comment type="catalytic activity">
    <reaction evidence="1">
        <text>di-trans,octa-cis-undecaprenyl diphosphate + H2O = di-trans,octa-cis-undecaprenyl phosphate + phosphate + H(+)</text>
        <dbReference type="Rhea" id="RHEA:28094"/>
        <dbReference type="ChEBI" id="CHEBI:15377"/>
        <dbReference type="ChEBI" id="CHEBI:15378"/>
        <dbReference type="ChEBI" id="CHEBI:43474"/>
        <dbReference type="ChEBI" id="CHEBI:58405"/>
        <dbReference type="ChEBI" id="CHEBI:60392"/>
        <dbReference type="EC" id="3.6.1.27"/>
    </reaction>
</comment>
<comment type="subcellular location">
    <subcellularLocation>
        <location evidence="1">Cell inner membrane</location>
        <topology evidence="1">Multi-pass membrane protein</topology>
    </subcellularLocation>
</comment>
<comment type="miscellaneous">
    <text>Bacitracin is thought to be involved in the inhibition of peptidoglycan synthesis by sequestering undecaprenyl diphosphate, thereby reducing the pool of lipid carrier available.</text>
</comment>
<comment type="similarity">
    <text evidence="1">Belongs to the UppP family.</text>
</comment>
<protein>
    <recommendedName>
        <fullName evidence="1">Undecaprenyl-diphosphatase</fullName>
        <ecNumber evidence="1">3.6.1.27</ecNumber>
    </recommendedName>
    <alternativeName>
        <fullName evidence="1">Bacitracin resistance protein</fullName>
    </alternativeName>
    <alternativeName>
        <fullName evidence="1">Undecaprenyl pyrophosphate phosphatase</fullName>
    </alternativeName>
</protein>
<organism>
    <name type="scientific">Rhodopseudomonas palustris (strain ATCC BAA-98 / CGA009)</name>
    <dbReference type="NCBI Taxonomy" id="258594"/>
    <lineage>
        <taxon>Bacteria</taxon>
        <taxon>Pseudomonadati</taxon>
        <taxon>Pseudomonadota</taxon>
        <taxon>Alphaproteobacteria</taxon>
        <taxon>Hyphomicrobiales</taxon>
        <taxon>Nitrobacteraceae</taxon>
        <taxon>Rhodopseudomonas</taxon>
    </lineage>
</organism>
<proteinExistence type="inferred from homology"/>
<keyword id="KW-0046">Antibiotic resistance</keyword>
<keyword id="KW-0997">Cell inner membrane</keyword>
<keyword id="KW-1003">Cell membrane</keyword>
<keyword id="KW-0133">Cell shape</keyword>
<keyword id="KW-0961">Cell wall biogenesis/degradation</keyword>
<keyword id="KW-0378">Hydrolase</keyword>
<keyword id="KW-0472">Membrane</keyword>
<keyword id="KW-0573">Peptidoglycan synthesis</keyword>
<keyword id="KW-0812">Transmembrane</keyword>
<keyword id="KW-1133">Transmembrane helix</keyword>